<keyword id="KW-0028">Amino-acid biosynthesis</keyword>
<keyword id="KW-0032">Aminotransferase</keyword>
<keyword id="KW-0963">Cytoplasm</keyword>
<keyword id="KW-0663">Pyridoxal phosphate</keyword>
<keyword id="KW-0664">Pyridoxine biosynthesis</keyword>
<keyword id="KW-0718">Serine biosynthesis</keyword>
<keyword id="KW-0808">Transferase</keyword>
<organism>
    <name type="scientific">Bacteroides fragilis (strain ATCC 25285 / DSM 2151 / CCUG 4856 / JCM 11019 / LMG 10263 / NCTC 9343 / Onslow / VPI 2553 / EN-2)</name>
    <dbReference type="NCBI Taxonomy" id="272559"/>
    <lineage>
        <taxon>Bacteria</taxon>
        <taxon>Pseudomonadati</taxon>
        <taxon>Bacteroidota</taxon>
        <taxon>Bacteroidia</taxon>
        <taxon>Bacteroidales</taxon>
        <taxon>Bacteroidaceae</taxon>
        <taxon>Bacteroides</taxon>
    </lineage>
</organism>
<protein>
    <recommendedName>
        <fullName evidence="1">Phosphoserine aminotransferase</fullName>
        <ecNumber evidence="1">2.6.1.52</ecNumber>
    </recommendedName>
    <alternativeName>
        <fullName evidence="1">Phosphohydroxythreonine aminotransferase</fullName>
        <shortName evidence="1">PSAT</shortName>
    </alternativeName>
</protein>
<evidence type="ECO:0000255" key="1">
    <source>
        <dbReference type="HAMAP-Rule" id="MF_00160"/>
    </source>
</evidence>
<feature type="chain" id="PRO_0000150148" description="Phosphoserine aminotransferase">
    <location>
        <begin position="1"/>
        <end position="355"/>
    </location>
</feature>
<feature type="binding site" evidence="1">
    <location>
        <position position="41"/>
    </location>
    <ligand>
        <name>L-glutamate</name>
        <dbReference type="ChEBI" id="CHEBI:29985"/>
    </ligand>
</feature>
<feature type="binding site" evidence="1">
    <location>
        <begin position="75"/>
        <end position="76"/>
    </location>
    <ligand>
        <name>pyridoxal 5'-phosphate</name>
        <dbReference type="ChEBI" id="CHEBI:597326"/>
    </ligand>
</feature>
<feature type="binding site" evidence="1">
    <location>
        <position position="99"/>
    </location>
    <ligand>
        <name>pyridoxal 5'-phosphate</name>
        <dbReference type="ChEBI" id="CHEBI:597326"/>
    </ligand>
</feature>
<feature type="binding site" evidence="1">
    <location>
        <position position="147"/>
    </location>
    <ligand>
        <name>pyridoxal 5'-phosphate</name>
        <dbReference type="ChEBI" id="CHEBI:597326"/>
    </ligand>
</feature>
<feature type="binding site" evidence="1">
    <location>
        <position position="166"/>
    </location>
    <ligand>
        <name>pyridoxal 5'-phosphate</name>
        <dbReference type="ChEBI" id="CHEBI:597326"/>
    </ligand>
</feature>
<feature type="binding site" evidence="1">
    <location>
        <position position="189"/>
    </location>
    <ligand>
        <name>pyridoxal 5'-phosphate</name>
        <dbReference type="ChEBI" id="CHEBI:597326"/>
    </ligand>
</feature>
<feature type="binding site" evidence="1">
    <location>
        <begin position="231"/>
        <end position="232"/>
    </location>
    <ligand>
        <name>pyridoxal 5'-phosphate</name>
        <dbReference type="ChEBI" id="CHEBI:597326"/>
    </ligand>
</feature>
<feature type="modified residue" description="N6-(pyridoxal phosphate)lysine" evidence="1">
    <location>
        <position position="190"/>
    </location>
</feature>
<gene>
    <name evidence="1" type="primary">serC</name>
    <name type="ordered locus">BF2072</name>
</gene>
<accession>Q5LDN9</accession>
<reference key="1">
    <citation type="journal article" date="2005" name="Science">
        <title>Extensive DNA inversions in the B. fragilis genome control variable gene expression.</title>
        <authorList>
            <person name="Cerdeno-Tarraga A.-M."/>
            <person name="Patrick S."/>
            <person name="Crossman L.C."/>
            <person name="Blakely G."/>
            <person name="Abratt V."/>
            <person name="Lennard N."/>
            <person name="Poxton I."/>
            <person name="Duerden B."/>
            <person name="Harris B."/>
            <person name="Quail M.A."/>
            <person name="Barron A."/>
            <person name="Clark L."/>
            <person name="Corton C."/>
            <person name="Doggett J."/>
            <person name="Holden M.T.G."/>
            <person name="Larke N."/>
            <person name="Line A."/>
            <person name="Lord A."/>
            <person name="Norbertczak H."/>
            <person name="Ormond D."/>
            <person name="Price C."/>
            <person name="Rabbinowitsch E."/>
            <person name="Woodward J."/>
            <person name="Barrell B.G."/>
            <person name="Parkhill J."/>
        </authorList>
    </citation>
    <scope>NUCLEOTIDE SEQUENCE [LARGE SCALE GENOMIC DNA]</scope>
    <source>
        <strain>ATCC 25285 / DSM 2151 / CCUG 4856 / JCM 11019 / LMG 10263 / NCTC 9343 / Onslow / VPI 2553 / EN-2</strain>
    </source>
</reference>
<proteinExistence type="inferred from homology"/>
<comment type="function">
    <text evidence="1">Catalyzes the reversible conversion of 3-phosphohydroxypyruvate to phosphoserine and of 3-hydroxy-2-oxo-4-phosphonooxybutanoate to phosphohydroxythreonine.</text>
</comment>
<comment type="catalytic activity">
    <reaction evidence="1">
        <text>O-phospho-L-serine + 2-oxoglutarate = 3-phosphooxypyruvate + L-glutamate</text>
        <dbReference type="Rhea" id="RHEA:14329"/>
        <dbReference type="ChEBI" id="CHEBI:16810"/>
        <dbReference type="ChEBI" id="CHEBI:18110"/>
        <dbReference type="ChEBI" id="CHEBI:29985"/>
        <dbReference type="ChEBI" id="CHEBI:57524"/>
        <dbReference type="EC" id="2.6.1.52"/>
    </reaction>
</comment>
<comment type="catalytic activity">
    <reaction evidence="1">
        <text>4-(phosphooxy)-L-threonine + 2-oxoglutarate = (R)-3-hydroxy-2-oxo-4-phosphooxybutanoate + L-glutamate</text>
        <dbReference type="Rhea" id="RHEA:16573"/>
        <dbReference type="ChEBI" id="CHEBI:16810"/>
        <dbReference type="ChEBI" id="CHEBI:29985"/>
        <dbReference type="ChEBI" id="CHEBI:58452"/>
        <dbReference type="ChEBI" id="CHEBI:58538"/>
        <dbReference type="EC" id="2.6.1.52"/>
    </reaction>
</comment>
<comment type="cofactor">
    <cofactor evidence="1">
        <name>pyridoxal 5'-phosphate</name>
        <dbReference type="ChEBI" id="CHEBI:597326"/>
    </cofactor>
    <text evidence="1">Binds 1 pyridoxal phosphate per subunit.</text>
</comment>
<comment type="pathway">
    <text evidence="1">Amino-acid biosynthesis; L-serine biosynthesis; L-serine from 3-phospho-D-glycerate: step 2/3.</text>
</comment>
<comment type="pathway">
    <text evidence="1">Cofactor biosynthesis; pyridoxine 5'-phosphate biosynthesis; pyridoxine 5'-phosphate from D-erythrose 4-phosphate: step 3/5.</text>
</comment>
<comment type="subunit">
    <text evidence="1">Homodimer.</text>
</comment>
<comment type="subcellular location">
    <subcellularLocation>
        <location evidence="1">Cytoplasm</location>
    </subcellularLocation>
</comment>
<comment type="similarity">
    <text evidence="1">Belongs to the class-V pyridoxal-phosphate-dependent aminotransferase family. SerC subfamily.</text>
</comment>
<dbReference type="EC" id="2.6.1.52" evidence="1"/>
<dbReference type="EMBL" id="CR626927">
    <property type="protein sequence ID" value="CAH07769.1"/>
    <property type="molecule type" value="Genomic_DNA"/>
</dbReference>
<dbReference type="RefSeq" id="WP_005794503.1">
    <property type="nucleotide sequence ID" value="NZ_UFTH01000001.1"/>
</dbReference>
<dbReference type="SMR" id="Q5LDN9"/>
<dbReference type="PaxDb" id="272559-BF9343_1988"/>
<dbReference type="GeneID" id="60365790"/>
<dbReference type="KEGG" id="bfs:BF9343_1988"/>
<dbReference type="eggNOG" id="COG1932">
    <property type="taxonomic scope" value="Bacteria"/>
</dbReference>
<dbReference type="HOGENOM" id="CLU_034866_0_2_10"/>
<dbReference type="UniPathway" id="UPA00135">
    <property type="reaction ID" value="UER00197"/>
</dbReference>
<dbReference type="UniPathway" id="UPA00244">
    <property type="reaction ID" value="UER00311"/>
</dbReference>
<dbReference type="Proteomes" id="UP000006731">
    <property type="component" value="Chromosome"/>
</dbReference>
<dbReference type="GO" id="GO:0005737">
    <property type="term" value="C:cytoplasm"/>
    <property type="evidence" value="ECO:0007669"/>
    <property type="project" value="UniProtKB-SubCell"/>
</dbReference>
<dbReference type="GO" id="GO:0004648">
    <property type="term" value="F:O-phospho-L-serine:2-oxoglutarate aminotransferase activity"/>
    <property type="evidence" value="ECO:0007669"/>
    <property type="project" value="UniProtKB-UniRule"/>
</dbReference>
<dbReference type="GO" id="GO:0030170">
    <property type="term" value="F:pyridoxal phosphate binding"/>
    <property type="evidence" value="ECO:0007669"/>
    <property type="project" value="UniProtKB-UniRule"/>
</dbReference>
<dbReference type="GO" id="GO:0006564">
    <property type="term" value="P:L-serine biosynthetic process"/>
    <property type="evidence" value="ECO:0007669"/>
    <property type="project" value="UniProtKB-UniRule"/>
</dbReference>
<dbReference type="GO" id="GO:0008615">
    <property type="term" value="P:pyridoxine biosynthetic process"/>
    <property type="evidence" value="ECO:0007669"/>
    <property type="project" value="UniProtKB-UniRule"/>
</dbReference>
<dbReference type="FunFam" id="3.40.640.10:FF:000010">
    <property type="entry name" value="Phosphoserine aminotransferase"/>
    <property type="match status" value="1"/>
</dbReference>
<dbReference type="FunFam" id="3.90.1150.10:FF:000006">
    <property type="entry name" value="Phosphoserine aminotransferase"/>
    <property type="match status" value="1"/>
</dbReference>
<dbReference type="Gene3D" id="3.90.1150.10">
    <property type="entry name" value="Aspartate Aminotransferase, domain 1"/>
    <property type="match status" value="1"/>
</dbReference>
<dbReference type="Gene3D" id="3.40.640.10">
    <property type="entry name" value="Type I PLP-dependent aspartate aminotransferase-like (Major domain)"/>
    <property type="match status" value="1"/>
</dbReference>
<dbReference type="HAMAP" id="MF_00160">
    <property type="entry name" value="SerC_aminotrans_5"/>
    <property type="match status" value="1"/>
</dbReference>
<dbReference type="InterPro" id="IPR000192">
    <property type="entry name" value="Aminotrans_V_dom"/>
</dbReference>
<dbReference type="InterPro" id="IPR022278">
    <property type="entry name" value="Pser_aminoTfrase"/>
</dbReference>
<dbReference type="InterPro" id="IPR015424">
    <property type="entry name" value="PyrdxlP-dep_Trfase"/>
</dbReference>
<dbReference type="InterPro" id="IPR015421">
    <property type="entry name" value="PyrdxlP-dep_Trfase_major"/>
</dbReference>
<dbReference type="InterPro" id="IPR015422">
    <property type="entry name" value="PyrdxlP-dep_Trfase_small"/>
</dbReference>
<dbReference type="NCBIfam" id="NF003764">
    <property type="entry name" value="PRK05355.1"/>
    <property type="match status" value="1"/>
</dbReference>
<dbReference type="PANTHER" id="PTHR43247">
    <property type="entry name" value="PHOSPHOSERINE AMINOTRANSFERASE"/>
    <property type="match status" value="1"/>
</dbReference>
<dbReference type="PANTHER" id="PTHR43247:SF1">
    <property type="entry name" value="PHOSPHOSERINE AMINOTRANSFERASE"/>
    <property type="match status" value="1"/>
</dbReference>
<dbReference type="Pfam" id="PF00266">
    <property type="entry name" value="Aminotran_5"/>
    <property type="match status" value="1"/>
</dbReference>
<dbReference type="PIRSF" id="PIRSF000525">
    <property type="entry name" value="SerC"/>
    <property type="match status" value="1"/>
</dbReference>
<dbReference type="SUPFAM" id="SSF53383">
    <property type="entry name" value="PLP-dependent transferases"/>
    <property type="match status" value="1"/>
</dbReference>
<sequence>MKKHNFSAGPSILPREVIEETAKAILDFNGSGLSVLEVSHRGKDFQAVMDEAVALFKEILNIPEGYSVLFLGGGASMQFCMVPYNFLEKKAAYLNTGVWAKKAMKEAKGFGEVVEVASSADANYTFIPKDFTIPADADYFHVTTNNTIYGTELKGDLDSPVPMVADMSSDIFSRPVDVSKYICIYGGAQKNLAPSGVTFVIVKDDAVGKVSRYIPSMLNYKTHIDGGSMFNTPPVLPIYSAMQTLRWIKAQGGVKEMDRRATEKADMLYAEIDRNKMFVGTAAKEDRSRMNICFVMAPEYKDLEADFLKFATDKGMSGIKGHRSVGGFRASCYNAMPKESVQALIDCMQEFEKLH</sequence>
<name>SERC_BACFN</name>